<protein>
    <recommendedName>
        <fullName>Uncharacterized protein PA2026</fullName>
    </recommendedName>
</protein>
<evidence type="ECO:0000305" key="1"/>
<keyword id="KW-1185">Reference proteome</keyword>
<accession>P39879</accession>
<accession>Q9I289</accession>
<organism>
    <name type="scientific">Pseudomonas aeruginosa (strain ATCC 15692 / DSM 22644 / CIP 104116 / JCM 14847 / LMG 12228 / 1C / PRS 101 / PAO1)</name>
    <dbReference type="NCBI Taxonomy" id="208964"/>
    <lineage>
        <taxon>Bacteria</taxon>
        <taxon>Pseudomonadati</taxon>
        <taxon>Pseudomonadota</taxon>
        <taxon>Gammaproteobacteria</taxon>
        <taxon>Pseudomonadales</taxon>
        <taxon>Pseudomonadaceae</taxon>
        <taxon>Pseudomonas</taxon>
    </lineage>
</organism>
<dbReference type="EMBL" id="AE004091">
    <property type="protein sequence ID" value="AAG05414.1"/>
    <property type="molecule type" value="Genomic_DNA"/>
</dbReference>
<dbReference type="EMBL" id="X54201">
    <property type="protein sequence ID" value="CAA38123.1"/>
    <property type="molecule type" value="Genomic_DNA"/>
</dbReference>
<dbReference type="PIR" id="G83391">
    <property type="entry name" value="G83391"/>
</dbReference>
<dbReference type="PIR" id="S15237">
    <property type="entry name" value="S15237"/>
</dbReference>
<dbReference type="RefSeq" id="NP_250716.1">
    <property type="nucleotide sequence ID" value="NC_002516.2"/>
</dbReference>
<dbReference type="RefSeq" id="WP_003100363.1">
    <property type="nucleotide sequence ID" value="NZ_QZGE01000026.1"/>
</dbReference>
<dbReference type="SMR" id="P39879"/>
<dbReference type="FunCoup" id="P39879">
    <property type="interactions" value="417"/>
</dbReference>
<dbReference type="STRING" id="208964.PA2026"/>
<dbReference type="PaxDb" id="208964-PA2026"/>
<dbReference type="DNASU" id="877995"/>
<dbReference type="GeneID" id="877995"/>
<dbReference type="KEGG" id="pae:PA2026"/>
<dbReference type="PATRIC" id="fig|208964.12.peg.2111"/>
<dbReference type="PseudoCAP" id="PA2026"/>
<dbReference type="HOGENOM" id="CLU_039013_1_0_6"/>
<dbReference type="InParanoid" id="P39879"/>
<dbReference type="OrthoDB" id="9792271at2"/>
<dbReference type="PhylomeDB" id="P39879"/>
<dbReference type="BioCyc" id="PAER208964:G1FZ6-2064-MONOMER"/>
<dbReference type="Proteomes" id="UP000002438">
    <property type="component" value="Chromosome"/>
</dbReference>
<dbReference type="GO" id="GO:0005886">
    <property type="term" value="C:plasma membrane"/>
    <property type="evidence" value="ECO:0000318"/>
    <property type="project" value="GO_Central"/>
</dbReference>
<dbReference type="FunFam" id="1.20.1530.20:FF:000005">
    <property type="entry name" value="Transporter, bile acid/Na+ symporter family"/>
    <property type="match status" value="1"/>
</dbReference>
<dbReference type="Gene3D" id="1.20.1530.20">
    <property type="match status" value="1"/>
</dbReference>
<dbReference type="InterPro" id="IPR038770">
    <property type="entry name" value="Na+/solute_symporter_sf"/>
</dbReference>
<dbReference type="InterPro" id="IPR016833">
    <property type="entry name" value="Put_Na-Bile_cotransptr"/>
</dbReference>
<dbReference type="PANTHER" id="PTHR18640:SF5">
    <property type="entry name" value="SODIUM_BILE ACID COTRANSPORTER 7"/>
    <property type="match status" value="1"/>
</dbReference>
<dbReference type="PANTHER" id="PTHR18640">
    <property type="entry name" value="SOLUTE CARRIER FAMILY 10 MEMBER 7"/>
    <property type="match status" value="1"/>
</dbReference>
<dbReference type="Pfam" id="PF13593">
    <property type="entry name" value="SBF_like"/>
    <property type="match status" value="1"/>
</dbReference>
<dbReference type="PIRSF" id="PIRSF026166">
    <property type="entry name" value="UCP026166"/>
    <property type="match status" value="1"/>
</dbReference>
<feature type="chain" id="PRO_0000206253" description="Uncharacterized protein PA2026">
    <location>
        <begin position="1"/>
        <end position="333"/>
    </location>
</feature>
<comment type="similarity">
    <text evidence="1">To E.coli YfeH.</text>
</comment>
<proteinExistence type="predicted"/>
<gene>
    <name type="ordered locus">PA2026</name>
</gene>
<reference key="1">
    <citation type="journal article" date="2000" name="Nature">
        <title>Complete genome sequence of Pseudomonas aeruginosa PAO1, an opportunistic pathogen.</title>
        <authorList>
            <person name="Stover C.K."/>
            <person name="Pham X.-Q.T."/>
            <person name="Erwin A.L."/>
            <person name="Mizoguchi S.D."/>
            <person name="Warrener P."/>
            <person name="Hickey M.J."/>
            <person name="Brinkman F.S.L."/>
            <person name="Hufnagle W.O."/>
            <person name="Kowalik D.J."/>
            <person name="Lagrou M."/>
            <person name="Garber R.L."/>
            <person name="Goltry L."/>
            <person name="Tolentino E."/>
            <person name="Westbrock-Wadman S."/>
            <person name="Yuan Y."/>
            <person name="Brody L.L."/>
            <person name="Coulter S.N."/>
            <person name="Folger K.R."/>
            <person name="Kas A."/>
            <person name="Larbig K."/>
            <person name="Lim R.M."/>
            <person name="Smith K.A."/>
            <person name="Spencer D.H."/>
            <person name="Wong G.K.-S."/>
            <person name="Wu Z."/>
            <person name="Paulsen I.T."/>
            <person name="Reizer J."/>
            <person name="Saier M.H. Jr."/>
            <person name="Hancock R.E.W."/>
            <person name="Lory S."/>
            <person name="Olson M.V."/>
        </authorList>
    </citation>
    <scope>NUCLEOTIDE SEQUENCE [LARGE SCALE GENOMIC DNA]</scope>
    <source>
        <strain>ATCC 15692 / DSM 22644 / CIP 104116 / JCM 14847 / LMG 12228 / 1C / PRS 101 / PAO1</strain>
    </source>
</reference>
<reference key="2">
    <citation type="journal article" date="1991" name="Mol. Microbiol.">
        <title>Molecular characterization of the gor gene encoding glutathione reductase from Pseudomonas aeruginosa: determinants of substrate specificity among pyridine nucleotide-disulphide oxidoreductases.</title>
        <authorList>
            <person name="Perry A.C.F."/>
            <person name="Ni Bhriain N."/>
            <person name="Brown N.L."/>
            <person name="Rouch D.A."/>
        </authorList>
    </citation>
    <scope>NUCLEOTIDE SEQUENCE [GENOMIC DNA] OF 281-333</scope>
    <source>
        <strain>PAO8</strain>
    </source>
</reference>
<sequence length="333" mass="35778">MSRPRFLPDNFTLALIATVLLATFLPCSGQTAVVFEWVTNIGIGLLFFLHGAKLSRQAIIAGMTHWRLHLLVFACTFVMFPLLGLALKPALSPMVTPELYLGILFLCALPATVQSSIAFTSLARGNVPAAVCSASVSSLLGVFLTPLLVKLLLGAEGETGNALDAIGKITLQLLVPFIAGQVLRRWIGAWVERNKPVLRYVDQGSILLVVYTAFSAAVIQGLWHEVPWLALLGLTVACCVILALALVLTTVLARRLGFSKEDEITIVFCGSKKSLATGVPMAKVLFATSAVGPMVLPLMLFHQIQLMVCAVLAQRYARRRDDAAAALAEAPSR</sequence>
<name>Y2026_PSEAE</name>